<accession>B0KFR1</accession>
<reference key="1">
    <citation type="submission" date="2008-01" db="EMBL/GenBank/DDBJ databases">
        <title>Complete sequence of Pseudomonas putida GB-1.</title>
        <authorList>
            <consortium name="US DOE Joint Genome Institute"/>
            <person name="Copeland A."/>
            <person name="Lucas S."/>
            <person name="Lapidus A."/>
            <person name="Barry K."/>
            <person name="Glavina del Rio T."/>
            <person name="Dalin E."/>
            <person name="Tice H."/>
            <person name="Pitluck S."/>
            <person name="Bruce D."/>
            <person name="Goodwin L."/>
            <person name="Chertkov O."/>
            <person name="Brettin T."/>
            <person name="Detter J.C."/>
            <person name="Han C."/>
            <person name="Kuske C.R."/>
            <person name="Schmutz J."/>
            <person name="Larimer F."/>
            <person name="Land M."/>
            <person name="Hauser L."/>
            <person name="Kyrpides N."/>
            <person name="Kim E."/>
            <person name="McCarthy J.K."/>
            <person name="Richardson P."/>
        </authorList>
    </citation>
    <scope>NUCLEOTIDE SEQUENCE [LARGE SCALE GENOMIC DNA]</scope>
    <source>
        <strain>GB-1</strain>
    </source>
</reference>
<comment type="function">
    <text evidence="1">Nucleotide-binding protein.</text>
</comment>
<comment type="similarity">
    <text evidence="1">Belongs to the YajQ family.</text>
</comment>
<dbReference type="EMBL" id="CP000926">
    <property type="protein sequence ID" value="ABZ00384.1"/>
    <property type="molecule type" value="Genomic_DNA"/>
</dbReference>
<dbReference type="RefSeq" id="WP_012274044.1">
    <property type="nucleotide sequence ID" value="NC_010322.1"/>
</dbReference>
<dbReference type="SMR" id="B0KFR1"/>
<dbReference type="KEGG" id="ppg:PputGB1_4497"/>
<dbReference type="eggNOG" id="COG1666">
    <property type="taxonomic scope" value="Bacteria"/>
</dbReference>
<dbReference type="HOGENOM" id="CLU_099839_1_0_6"/>
<dbReference type="Proteomes" id="UP000002157">
    <property type="component" value="Chromosome"/>
</dbReference>
<dbReference type="GO" id="GO:0005829">
    <property type="term" value="C:cytosol"/>
    <property type="evidence" value="ECO:0007669"/>
    <property type="project" value="TreeGrafter"/>
</dbReference>
<dbReference type="GO" id="GO:0000166">
    <property type="term" value="F:nucleotide binding"/>
    <property type="evidence" value="ECO:0007669"/>
    <property type="project" value="TreeGrafter"/>
</dbReference>
<dbReference type="CDD" id="cd11740">
    <property type="entry name" value="YajQ_like"/>
    <property type="match status" value="1"/>
</dbReference>
<dbReference type="FunFam" id="3.30.70.860:FF:000001">
    <property type="entry name" value="UPF0234 protein YajQ"/>
    <property type="match status" value="1"/>
</dbReference>
<dbReference type="Gene3D" id="3.30.70.860">
    <property type="match status" value="1"/>
</dbReference>
<dbReference type="Gene3D" id="3.30.70.990">
    <property type="entry name" value="YajQ-like, domain 2"/>
    <property type="match status" value="1"/>
</dbReference>
<dbReference type="HAMAP" id="MF_00632">
    <property type="entry name" value="YajQ"/>
    <property type="match status" value="1"/>
</dbReference>
<dbReference type="InterPro" id="IPR007551">
    <property type="entry name" value="DUF520"/>
</dbReference>
<dbReference type="InterPro" id="IPR035571">
    <property type="entry name" value="UPF0234-like_C"/>
</dbReference>
<dbReference type="InterPro" id="IPR035570">
    <property type="entry name" value="UPF0234_N"/>
</dbReference>
<dbReference type="InterPro" id="IPR036183">
    <property type="entry name" value="YajQ-like_sf"/>
</dbReference>
<dbReference type="NCBIfam" id="NF003819">
    <property type="entry name" value="PRK05412.1"/>
    <property type="match status" value="1"/>
</dbReference>
<dbReference type="PANTHER" id="PTHR30476">
    <property type="entry name" value="UPF0234 PROTEIN YAJQ"/>
    <property type="match status" value="1"/>
</dbReference>
<dbReference type="PANTHER" id="PTHR30476:SF0">
    <property type="entry name" value="UPF0234 PROTEIN YAJQ"/>
    <property type="match status" value="1"/>
</dbReference>
<dbReference type="Pfam" id="PF04461">
    <property type="entry name" value="DUF520"/>
    <property type="match status" value="1"/>
</dbReference>
<dbReference type="SUPFAM" id="SSF89963">
    <property type="entry name" value="YajQ-like"/>
    <property type="match status" value="2"/>
</dbReference>
<sequence length="161" mass="18559">MPSFDVVSELDKHEVQNAVDNAIKELDRRYDLKGKGSFEFKDKDQTVMLTAEEEFQLEAMLEILRLALVKRKIDVKCLETKDPYPSGKEKKQEAKFREGIDKDLAKKIVATIKDGKLKVQAAIQGEQVRVTGKKRDDLQEAIALLRTKEFDMPLQFNNFRD</sequence>
<keyword id="KW-0547">Nucleotide-binding</keyword>
<feature type="chain" id="PRO_1000082631" description="Nucleotide-binding protein PputGB1_4497">
    <location>
        <begin position="1"/>
        <end position="161"/>
    </location>
</feature>
<protein>
    <recommendedName>
        <fullName evidence="1">Nucleotide-binding protein PputGB1_4497</fullName>
    </recommendedName>
</protein>
<evidence type="ECO:0000255" key="1">
    <source>
        <dbReference type="HAMAP-Rule" id="MF_00632"/>
    </source>
</evidence>
<proteinExistence type="inferred from homology"/>
<gene>
    <name type="ordered locus">PputGB1_4497</name>
</gene>
<name>Y4497_PSEPG</name>
<organism>
    <name type="scientific">Pseudomonas putida (strain GB-1)</name>
    <dbReference type="NCBI Taxonomy" id="76869"/>
    <lineage>
        <taxon>Bacteria</taxon>
        <taxon>Pseudomonadati</taxon>
        <taxon>Pseudomonadota</taxon>
        <taxon>Gammaproteobacteria</taxon>
        <taxon>Pseudomonadales</taxon>
        <taxon>Pseudomonadaceae</taxon>
        <taxon>Pseudomonas</taxon>
    </lineage>
</organism>